<dbReference type="EMBL" id="CU928164">
    <property type="protein sequence ID" value="CAR20095.1"/>
    <property type="molecule type" value="Genomic_DNA"/>
</dbReference>
<dbReference type="RefSeq" id="WP_000626187.1">
    <property type="nucleotide sequence ID" value="NC_011750.1"/>
</dbReference>
<dbReference type="RefSeq" id="YP_002409876.1">
    <property type="nucleotide sequence ID" value="NC_011750.1"/>
</dbReference>
<dbReference type="SMR" id="B7NNB6"/>
<dbReference type="STRING" id="585057.ECIAI39_3983"/>
<dbReference type="GeneID" id="93778499"/>
<dbReference type="KEGG" id="ect:ECIAI39_3983"/>
<dbReference type="PATRIC" id="fig|585057.6.peg.4123"/>
<dbReference type="HOGENOM" id="CLU_151816_0_0_6"/>
<dbReference type="Proteomes" id="UP000000749">
    <property type="component" value="Chromosome"/>
</dbReference>
<dbReference type="GO" id="GO:0005886">
    <property type="term" value="C:plasma membrane"/>
    <property type="evidence" value="ECO:0007669"/>
    <property type="project" value="UniProtKB-SubCell"/>
</dbReference>
<dbReference type="HAMAP" id="MF_01088">
    <property type="entry name" value="UspB"/>
    <property type="match status" value="1"/>
</dbReference>
<dbReference type="InterPro" id="IPR019598">
    <property type="entry name" value="Universal_stress_protein_B"/>
</dbReference>
<dbReference type="NCBIfam" id="NF003435">
    <property type="entry name" value="PRK04960.1"/>
    <property type="match status" value="1"/>
</dbReference>
<dbReference type="Pfam" id="PF10625">
    <property type="entry name" value="UspB"/>
    <property type="match status" value="1"/>
</dbReference>
<proteinExistence type="inferred from homology"/>
<sequence>MISTVALFWALCVVCIVNMARYFSSLRALLVVLRNCDPLLYQYVDGGGFFTSHGQPNKQVRLVWYIYAQRYRDHHDDEFIRRCERVRRQFILTSALCGLVVVSLIALMIWH</sequence>
<keyword id="KW-0997">Cell inner membrane</keyword>
<keyword id="KW-1003">Cell membrane</keyword>
<keyword id="KW-0472">Membrane</keyword>
<keyword id="KW-0812">Transmembrane</keyword>
<keyword id="KW-1133">Transmembrane helix</keyword>
<protein>
    <recommendedName>
        <fullName evidence="1">Universal stress protein B</fullName>
    </recommendedName>
</protein>
<feature type="chain" id="PRO_1000136912" description="Universal stress protein B">
    <location>
        <begin position="1"/>
        <end position="111"/>
    </location>
</feature>
<feature type="transmembrane region" description="Helical" evidence="1">
    <location>
        <begin position="1"/>
        <end position="21"/>
    </location>
</feature>
<feature type="transmembrane region" description="Helical" evidence="1">
    <location>
        <begin position="90"/>
        <end position="110"/>
    </location>
</feature>
<gene>
    <name evidence="1" type="primary">uspB</name>
    <name type="ordered locus">ECIAI39_3983</name>
</gene>
<name>USPB_ECO7I</name>
<accession>B7NNB6</accession>
<reference key="1">
    <citation type="journal article" date="2009" name="PLoS Genet.">
        <title>Organised genome dynamics in the Escherichia coli species results in highly diverse adaptive paths.</title>
        <authorList>
            <person name="Touchon M."/>
            <person name="Hoede C."/>
            <person name="Tenaillon O."/>
            <person name="Barbe V."/>
            <person name="Baeriswyl S."/>
            <person name="Bidet P."/>
            <person name="Bingen E."/>
            <person name="Bonacorsi S."/>
            <person name="Bouchier C."/>
            <person name="Bouvet O."/>
            <person name="Calteau A."/>
            <person name="Chiapello H."/>
            <person name="Clermont O."/>
            <person name="Cruveiller S."/>
            <person name="Danchin A."/>
            <person name="Diard M."/>
            <person name="Dossat C."/>
            <person name="Karoui M.E."/>
            <person name="Frapy E."/>
            <person name="Garry L."/>
            <person name="Ghigo J.M."/>
            <person name="Gilles A.M."/>
            <person name="Johnson J."/>
            <person name="Le Bouguenec C."/>
            <person name="Lescat M."/>
            <person name="Mangenot S."/>
            <person name="Martinez-Jehanne V."/>
            <person name="Matic I."/>
            <person name="Nassif X."/>
            <person name="Oztas S."/>
            <person name="Petit M.A."/>
            <person name="Pichon C."/>
            <person name="Rouy Z."/>
            <person name="Ruf C.S."/>
            <person name="Schneider D."/>
            <person name="Tourret J."/>
            <person name="Vacherie B."/>
            <person name="Vallenet D."/>
            <person name="Medigue C."/>
            <person name="Rocha E.P.C."/>
            <person name="Denamur E."/>
        </authorList>
    </citation>
    <scope>NUCLEOTIDE SEQUENCE [LARGE SCALE GENOMIC DNA]</scope>
    <source>
        <strain>IAI39 / ExPEC</strain>
    </source>
</reference>
<comment type="subcellular location">
    <subcellularLocation>
        <location evidence="1">Cell inner membrane</location>
        <topology evidence="1">Multi-pass membrane protein</topology>
    </subcellularLocation>
</comment>
<comment type="similarity">
    <text evidence="1">Belongs to the universal stress protein B family.</text>
</comment>
<organism>
    <name type="scientific">Escherichia coli O7:K1 (strain IAI39 / ExPEC)</name>
    <dbReference type="NCBI Taxonomy" id="585057"/>
    <lineage>
        <taxon>Bacteria</taxon>
        <taxon>Pseudomonadati</taxon>
        <taxon>Pseudomonadota</taxon>
        <taxon>Gammaproteobacteria</taxon>
        <taxon>Enterobacterales</taxon>
        <taxon>Enterobacteriaceae</taxon>
        <taxon>Escherichia</taxon>
    </lineage>
</organism>
<evidence type="ECO:0000255" key="1">
    <source>
        <dbReference type="HAMAP-Rule" id="MF_01088"/>
    </source>
</evidence>